<organism>
    <name type="scientific">Rhizobium meliloti (strain 1021)</name>
    <name type="common">Ensifer meliloti</name>
    <name type="synonym">Sinorhizobium meliloti</name>
    <dbReference type="NCBI Taxonomy" id="266834"/>
    <lineage>
        <taxon>Bacteria</taxon>
        <taxon>Pseudomonadati</taxon>
        <taxon>Pseudomonadota</taxon>
        <taxon>Alphaproteobacteria</taxon>
        <taxon>Hyphomicrobiales</taxon>
        <taxon>Rhizobiaceae</taxon>
        <taxon>Sinorhizobium/Ensifer group</taxon>
        <taxon>Sinorhizobium</taxon>
    </lineage>
</organism>
<feature type="chain" id="PRO_0000198515" description="Ribonuclease P protein component">
    <location>
        <begin position="1"/>
        <end position="128"/>
    </location>
</feature>
<keyword id="KW-0255">Endonuclease</keyword>
<keyword id="KW-0378">Hydrolase</keyword>
<keyword id="KW-0540">Nuclease</keyword>
<keyword id="KW-1185">Reference proteome</keyword>
<keyword id="KW-0694">RNA-binding</keyword>
<keyword id="KW-0819">tRNA processing</keyword>
<accession>Q92SF4</accession>
<comment type="function">
    <text evidence="1">RNaseP catalyzes the removal of the 5'-leader sequence from pre-tRNA to produce the mature 5'-terminus. It can also cleave other RNA substrates such as 4.5S RNA. The protein component plays an auxiliary but essential role in vivo by binding to the 5'-leader sequence and broadening the substrate specificity of the ribozyme.</text>
</comment>
<comment type="catalytic activity">
    <reaction evidence="1">
        <text>Endonucleolytic cleavage of RNA, removing 5'-extranucleotides from tRNA precursor.</text>
        <dbReference type="EC" id="3.1.26.5"/>
    </reaction>
</comment>
<comment type="subunit">
    <text evidence="1">Consists of a catalytic RNA component (M1 or rnpB) and a protein subunit.</text>
</comment>
<comment type="similarity">
    <text evidence="1">Belongs to the RnpA family.</text>
</comment>
<dbReference type="EC" id="3.1.26.5" evidence="1"/>
<dbReference type="EMBL" id="AL591688">
    <property type="protein sequence ID" value="CAC41882.1"/>
    <property type="molecule type" value="Genomic_DNA"/>
</dbReference>
<dbReference type="RefSeq" id="NP_384551.1">
    <property type="nucleotide sequence ID" value="NC_003047.1"/>
</dbReference>
<dbReference type="SMR" id="Q92SF4"/>
<dbReference type="EnsemblBacteria" id="CAC41882">
    <property type="protein sequence ID" value="CAC41882"/>
    <property type="gene ID" value="SMc01720"/>
</dbReference>
<dbReference type="KEGG" id="sme:SMc01720"/>
<dbReference type="PATRIC" id="fig|266834.11.peg.1820"/>
<dbReference type="eggNOG" id="COG0594">
    <property type="taxonomic scope" value="Bacteria"/>
</dbReference>
<dbReference type="HOGENOM" id="CLU_117179_6_1_5"/>
<dbReference type="OrthoDB" id="9810867at2"/>
<dbReference type="Proteomes" id="UP000001976">
    <property type="component" value="Chromosome"/>
</dbReference>
<dbReference type="GO" id="GO:0030677">
    <property type="term" value="C:ribonuclease P complex"/>
    <property type="evidence" value="ECO:0007669"/>
    <property type="project" value="TreeGrafter"/>
</dbReference>
<dbReference type="GO" id="GO:0042781">
    <property type="term" value="F:3'-tRNA processing endoribonuclease activity"/>
    <property type="evidence" value="ECO:0007669"/>
    <property type="project" value="TreeGrafter"/>
</dbReference>
<dbReference type="GO" id="GO:0004526">
    <property type="term" value="F:ribonuclease P activity"/>
    <property type="evidence" value="ECO:0007669"/>
    <property type="project" value="UniProtKB-UniRule"/>
</dbReference>
<dbReference type="GO" id="GO:0000049">
    <property type="term" value="F:tRNA binding"/>
    <property type="evidence" value="ECO:0007669"/>
    <property type="project" value="UniProtKB-UniRule"/>
</dbReference>
<dbReference type="GO" id="GO:0001682">
    <property type="term" value="P:tRNA 5'-leader removal"/>
    <property type="evidence" value="ECO:0007669"/>
    <property type="project" value="UniProtKB-UniRule"/>
</dbReference>
<dbReference type="Gene3D" id="3.30.230.10">
    <property type="match status" value="1"/>
</dbReference>
<dbReference type="HAMAP" id="MF_00227">
    <property type="entry name" value="RNase_P"/>
    <property type="match status" value="1"/>
</dbReference>
<dbReference type="InterPro" id="IPR020568">
    <property type="entry name" value="Ribosomal_Su5_D2-typ_SF"/>
</dbReference>
<dbReference type="InterPro" id="IPR014721">
    <property type="entry name" value="Ribsml_uS5_D2-typ_fold_subgr"/>
</dbReference>
<dbReference type="InterPro" id="IPR000100">
    <property type="entry name" value="RNase_P"/>
</dbReference>
<dbReference type="NCBIfam" id="TIGR00188">
    <property type="entry name" value="rnpA"/>
    <property type="match status" value="1"/>
</dbReference>
<dbReference type="PANTHER" id="PTHR33992">
    <property type="entry name" value="RIBONUCLEASE P PROTEIN COMPONENT"/>
    <property type="match status" value="1"/>
</dbReference>
<dbReference type="PANTHER" id="PTHR33992:SF1">
    <property type="entry name" value="RIBONUCLEASE P PROTEIN COMPONENT"/>
    <property type="match status" value="1"/>
</dbReference>
<dbReference type="Pfam" id="PF00825">
    <property type="entry name" value="Ribonuclease_P"/>
    <property type="match status" value="1"/>
</dbReference>
<dbReference type="SUPFAM" id="SSF54211">
    <property type="entry name" value="Ribosomal protein S5 domain 2-like"/>
    <property type="match status" value="1"/>
</dbReference>
<reference key="1">
    <citation type="journal article" date="2001" name="Proc. Natl. Acad. Sci. U.S.A.">
        <title>Analysis of the chromosome sequence of the legume symbiont Sinorhizobium meliloti strain 1021.</title>
        <authorList>
            <person name="Capela D."/>
            <person name="Barloy-Hubler F."/>
            <person name="Gouzy J."/>
            <person name="Bothe G."/>
            <person name="Ampe F."/>
            <person name="Batut J."/>
            <person name="Boistard P."/>
            <person name="Becker A."/>
            <person name="Boutry M."/>
            <person name="Cadieu E."/>
            <person name="Dreano S."/>
            <person name="Gloux S."/>
            <person name="Godrie T."/>
            <person name="Goffeau A."/>
            <person name="Kahn D."/>
            <person name="Kiss E."/>
            <person name="Lelaure V."/>
            <person name="Masuy D."/>
            <person name="Pohl T."/>
            <person name="Portetelle D."/>
            <person name="Puehler A."/>
            <person name="Purnelle B."/>
            <person name="Ramsperger U."/>
            <person name="Renard C."/>
            <person name="Thebault P."/>
            <person name="Vandenbol M."/>
            <person name="Weidner S."/>
            <person name="Galibert F."/>
        </authorList>
    </citation>
    <scope>NUCLEOTIDE SEQUENCE [LARGE SCALE GENOMIC DNA]</scope>
    <source>
        <strain>1021</strain>
    </source>
</reference>
<reference key="2">
    <citation type="journal article" date="2001" name="Science">
        <title>The composite genome of the legume symbiont Sinorhizobium meliloti.</title>
        <authorList>
            <person name="Galibert F."/>
            <person name="Finan T.M."/>
            <person name="Long S.R."/>
            <person name="Puehler A."/>
            <person name="Abola P."/>
            <person name="Ampe F."/>
            <person name="Barloy-Hubler F."/>
            <person name="Barnett M.J."/>
            <person name="Becker A."/>
            <person name="Boistard P."/>
            <person name="Bothe G."/>
            <person name="Boutry M."/>
            <person name="Bowser L."/>
            <person name="Buhrmester J."/>
            <person name="Cadieu E."/>
            <person name="Capela D."/>
            <person name="Chain P."/>
            <person name="Cowie A."/>
            <person name="Davis R.W."/>
            <person name="Dreano S."/>
            <person name="Federspiel N.A."/>
            <person name="Fisher R.F."/>
            <person name="Gloux S."/>
            <person name="Godrie T."/>
            <person name="Goffeau A."/>
            <person name="Golding B."/>
            <person name="Gouzy J."/>
            <person name="Gurjal M."/>
            <person name="Hernandez-Lucas I."/>
            <person name="Hong A."/>
            <person name="Huizar L."/>
            <person name="Hyman R.W."/>
            <person name="Jones T."/>
            <person name="Kahn D."/>
            <person name="Kahn M.L."/>
            <person name="Kalman S."/>
            <person name="Keating D.H."/>
            <person name="Kiss E."/>
            <person name="Komp C."/>
            <person name="Lelaure V."/>
            <person name="Masuy D."/>
            <person name="Palm C."/>
            <person name="Peck M.C."/>
            <person name="Pohl T.M."/>
            <person name="Portetelle D."/>
            <person name="Purnelle B."/>
            <person name="Ramsperger U."/>
            <person name="Surzycki R."/>
            <person name="Thebault P."/>
            <person name="Vandenbol M."/>
            <person name="Vorhoelter F.J."/>
            <person name="Weidner S."/>
            <person name="Wells D.H."/>
            <person name="Wong K."/>
            <person name="Yeh K.-C."/>
            <person name="Batut J."/>
        </authorList>
    </citation>
    <scope>NUCLEOTIDE SEQUENCE [LARGE SCALE GENOMIC DNA]</scope>
    <source>
        <strain>1021</strain>
    </source>
</reference>
<name>RNPA_RHIME</name>
<gene>
    <name evidence="1" type="primary">rnpA</name>
    <name type="ordered locus">R00445</name>
    <name type="ORF">SMc01720</name>
</gene>
<protein>
    <recommendedName>
        <fullName evidence="1">Ribonuclease P protein component</fullName>
        <shortName evidence="1">RNase P protein</shortName>
        <shortName evidence="1">RNaseP protein</shortName>
        <ecNumber evidence="1">3.1.26.5</ecNumber>
    </recommendedName>
    <alternativeName>
        <fullName evidence="1">Protein C5</fullName>
    </alternativeName>
</protein>
<proteinExistence type="inferred from homology"/>
<sequence>MTTDKDKMAVGRLKSRPQFLAVRAGESRRGPLFLLEVLDRNDPEGEARVGFTVTKKHGNAVERNRMRRRLKEAVRLSAGFAMKPGHDYVIVARRDLLNAPFDALTRALRDRIENKPKQKRPPAGSRKS</sequence>
<evidence type="ECO:0000255" key="1">
    <source>
        <dbReference type="HAMAP-Rule" id="MF_00227"/>
    </source>
</evidence>